<accession>Q98Q13</accession>
<protein>
    <recommendedName>
        <fullName evidence="1">Putative pre-16S rRNA nuclease</fullName>
        <ecNumber evidence="1">3.1.-.-</ecNumber>
    </recommendedName>
</protein>
<dbReference type="EC" id="3.1.-.-" evidence="1"/>
<dbReference type="EMBL" id="AL445565">
    <property type="protein sequence ID" value="CAC13729.1"/>
    <property type="molecule type" value="Genomic_DNA"/>
</dbReference>
<dbReference type="PIR" id="D90581">
    <property type="entry name" value="D90581"/>
</dbReference>
<dbReference type="RefSeq" id="WP_010925357.1">
    <property type="nucleotide sequence ID" value="NC_002771.1"/>
</dbReference>
<dbReference type="SMR" id="Q98Q13"/>
<dbReference type="STRING" id="272635.gene:17577163"/>
<dbReference type="KEGG" id="mpu:MYPU_5560"/>
<dbReference type="eggNOG" id="COG0816">
    <property type="taxonomic scope" value="Bacteria"/>
</dbReference>
<dbReference type="HOGENOM" id="CLU_098240_2_2_14"/>
<dbReference type="BioCyc" id="MPUL272635:G1GT6-569-MONOMER"/>
<dbReference type="Proteomes" id="UP000000528">
    <property type="component" value="Chromosome"/>
</dbReference>
<dbReference type="GO" id="GO:0005829">
    <property type="term" value="C:cytosol"/>
    <property type="evidence" value="ECO:0007669"/>
    <property type="project" value="TreeGrafter"/>
</dbReference>
<dbReference type="GO" id="GO:0004518">
    <property type="term" value="F:nuclease activity"/>
    <property type="evidence" value="ECO:0007669"/>
    <property type="project" value="UniProtKB-KW"/>
</dbReference>
<dbReference type="GO" id="GO:0000967">
    <property type="term" value="P:rRNA 5'-end processing"/>
    <property type="evidence" value="ECO:0007669"/>
    <property type="project" value="UniProtKB-UniRule"/>
</dbReference>
<dbReference type="CDD" id="cd16964">
    <property type="entry name" value="YqgF"/>
    <property type="match status" value="1"/>
</dbReference>
<dbReference type="Gene3D" id="3.30.420.140">
    <property type="entry name" value="YqgF/RNase H-like domain"/>
    <property type="match status" value="1"/>
</dbReference>
<dbReference type="HAMAP" id="MF_00651">
    <property type="entry name" value="Nuclease_YqgF"/>
    <property type="match status" value="1"/>
</dbReference>
<dbReference type="InterPro" id="IPR012337">
    <property type="entry name" value="RNaseH-like_sf"/>
</dbReference>
<dbReference type="InterPro" id="IPR005227">
    <property type="entry name" value="YqgF"/>
</dbReference>
<dbReference type="InterPro" id="IPR006641">
    <property type="entry name" value="YqgF/RNaseH-like_dom"/>
</dbReference>
<dbReference type="InterPro" id="IPR037027">
    <property type="entry name" value="YqgF/RNaseH-like_dom_sf"/>
</dbReference>
<dbReference type="NCBIfam" id="TIGR00250">
    <property type="entry name" value="RNAse_H_YqgF"/>
    <property type="match status" value="1"/>
</dbReference>
<dbReference type="PANTHER" id="PTHR33317">
    <property type="entry name" value="POLYNUCLEOTIDYL TRANSFERASE, RIBONUCLEASE H-LIKE SUPERFAMILY PROTEIN"/>
    <property type="match status" value="1"/>
</dbReference>
<dbReference type="PANTHER" id="PTHR33317:SF4">
    <property type="entry name" value="POLYNUCLEOTIDYL TRANSFERASE, RIBONUCLEASE H-LIKE SUPERFAMILY PROTEIN"/>
    <property type="match status" value="1"/>
</dbReference>
<dbReference type="Pfam" id="PF03652">
    <property type="entry name" value="RuvX"/>
    <property type="match status" value="1"/>
</dbReference>
<dbReference type="SMART" id="SM00732">
    <property type="entry name" value="YqgFc"/>
    <property type="match status" value="1"/>
</dbReference>
<dbReference type="SUPFAM" id="SSF53098">
    <property type="entry name" value="Ribonuclease H-like"/>
    <property type="match status" value="1"/>
</dbReference>
<keyword id="KW-0963">Cytoplasm</keyword>
<keyword id="KW-0378">Hydrolase</keyword>
<keyword id="KW-0540">Nuclease</keyword>
<keyword id="KW-1185">Reference proteome</keyword>
<keyword id="KW-0690">Ribosome biogenesis</keyword>
<organism>
    <name type="scientific">Mycoplasmopsis pulmonis (strain UAB CTIP)</name>
    <name type="common">Mycoplasma pulmonis</name>
    <dbReference type="NCBI Taxonomy" id="272635"/>
    <lineage>
        <taxon>Bacteria</taxon>
        <taxon>Bacillati</taxon>
        <taxon>Mycoplasmatota</taxon>
        <taxon>Mycoplasmoidales</taxon>
        <taxon>Metamycoplasmataceae</taxon>
        <taxon>Mycoplasmopsis</taxon>
    </lineage>
</organism>
<sequence length="146" mass="16929">MAKVMRKIALDLGTKSCGFAISDPISNSFAIPLENFFFEENNFKKVINKLKHYEKKYEFDTIILGYPLRMTGTRSERSIMVEEFEKLLRKTFSQRIVLVDERLSTVKAKAMLKETNISQSKIKEKKDSMAAALLLNYYLNNFLGVR</sequence>
<evidence type="ECO:0000255" key="1">
    <source>
        <dbReference type="HAMAP-Rule" id="MF_00651"/>
    </source>
</evidence>
<proteinExistence type="inferred from homology"/>
<feature type="chain" id="PRO_0000172099" description="Putative pre-16S rRNA nuclease">
    <location>
        <begin position="1"/>
        <end position="146"/>
    </location>
</feature>
<gene>
    <name type="ordered locus">MYPU_5560</name>
</gene>
<name>YQGF_MYCPU</name>
<reference key="1">
    <citation type="journal article" date="2001" name="Nucleic Acids Res.">
        <title>The complete genome sequence of the murine respiratory pathogen Mycoplasma pulmonis.</title>
        <authorList>
            <person name="Chambaud I."/>
            <person name="Heilig R."/>
            <person name="Ferris S."/>
            <person name="Barbe V."/>
            <person name="Samson D."/>
            <person name="Galisson F."/>
            <person name="Moszer I."/>
            <person name="Dybvig K."/>
            <person name="Wroblewski H."/>
            <person name="Viari A."/>
            <person name="Rocha E.P.C."/>
            <person name="Blanchard A."/>
        </authorList>
    </citation>
    <scope>NUCLEOTIDE SEQUENCE [LARGE SCALE GENOMIC DNA]</scope>
    <source>
        <strain>UAB CTIP</strain>
    </source>
</reference>
<comment type="function">
    <text evidence="1">Could be a nuclease involved in processing of the 5'-end of pre-16S rRNA.</text>
</comment>
<comment type="subcellular location">
    <subcellularLocation>
        <location evidence="1">Cytoplasm</location>
    </subcellularLocation>
</comment>
<comment type="similarity">
    <text evidence="1">Belongs to the YqgF nuclease family.</text>
</comment>